<name>CYPH_LUPLU</name>
<protein>
    <recommendedName>
        <fullName>Peptidyl-prolyl cis-trans isomerase</fullName>
        <shortName>PPIase</shortName>
        <ecNumber>5.2.1.8</ecNumber>
    </recommendedName>
    <alternativeName>
        <fullName>Cyclophilin</fullName>
    </alternativeName>
    <alternativeName>
        <fullName>Cyclosporin A-binding protein</fullName>
    </alternativeName>
    <alternativeName>
        <fullName>Rotamase</fullName>
    </alternativeName>
</protein>
<proteinExistence type="evidence at transcript level"/>
<comment type="function">
    <text>PPIases accelerate the folding of proteins. It catalyzes the cis-trans isomerization of proline imidic peptide bonds in oligopeptides.</text>
</comment>
<comment type="catalytic activity">
    <reaction>
        <text>[protein]-peptidylproline (omega=180) = [protein]-peptidylproline (omega=0)</text>
        <dbReference type="Rhea" id="RHEA:16237"/>
        <dbReference type="Rhea" id="RHEA-COMP:10747"/>
        <dbReference type="Rhea" id="RHEA-COMP:10748"/>
        <dbReference type="ChEBI" id="CHEBI:83833"/>
        <dbReference type="ChEBI" id="CHEBI:83834"/>
        <dbReference type="EC" id="5.2.1.8"/>
    </reaction>
</comment>
<comment type="activity regulation">
    <text>Binds cyclosporin A (CsA). CsA mediates some of its effects via an inhibitory action on PPIase.</text>
</comment>
<comment type="subcellular location">
    <subcellularLocation>
        <location>Cytoplasm</location>
    </subcellularLocation>
</comment>
<comment type="tissue specificity">
    <text evidence="2">Expressed in meristematic tissues, with higher levels in nodules.</text>
</comment>
<comment type="similarity">
    <text evidence="3">Belongs to the cyclophilin-type PPIase family.</text>
</comment>
<sequence>MSNPKVFFDMAIAGNPAGRIVMELYADTTPRTAENFRALCTGEKGVGRSGKPLHYKGSTFHRVIPNFMCQGGDFTAGNGTGAESIYGAKFADENFIKRHTGPGILSMANAGAGTNGSQFFICTEKTEWLDGKHVVFGKVIEGMNVVRDIEKVGSGSGKTSRPVTIADCGQLS</sequence>
<keyword id="KW-0963">Cytoplasm</keyword>
<keyword id="KW-0413">Isomerase</keyword>
<keyword id="KW-0697">Rotamase</keyword>
<dbReference type="EC" id="5.2.1.8"/>
<dbReference type="EMBL" id="Y16088">
    <property type="protein sequence ID" value="CAA76054.1"/>
    <property type="molecule type" value="mRNA"/>
</dbReference>
<dbReference type="EMBL" id="AF178458">
    <property type="protein sequence ID" value="AAF00471.1"/>
    <property type="molecule type" value="Genomic_DNA"/>
</dbReference>
<dbReference type="SMR" id="O49886"/>
<dbReference type="BRENDA" id="5.2.1.8">
    <property type="organism ID" value="3093"/>
</dbReference>
<dbReference type="GO" id="GO:0005737">
    <property type="term" value="C:cytoplasm"/>
    <property type="evidence" value="ECO:0007669"/>
    <property type="project" value="UniProtKB-SubCell"/>
</dbReference>
<dbReference type="GO" id="GO:0016018">
    <property type="term" value="F:cyclosporin A binding"/>
    <property type="evidence" value="ECO:0007669"/>
    <property type="project" value="TreeGrafter"/>
</dbReference>
<dbReference type="GO" id="GO:0003755">
    <property type="term" value="F:peptidyl-prolyl cis-trans isomerase activity"/>
    <property type="evidence" value="ECO:0007669"/>
    <property type="project" value="UniProtKB-KW"/>
</dbReference>
<dbReference type="GO" id="GO:0006457">
    <property type="term" value="P:protein folding"/>
    <property type="evidence" value="ECO:0007669"/>
    <property type="project" value="InterPro"/>
</dbReference>
<dbReference type="CDD" id="cd01926">
    <property type="entry name" value="cyclophilin_ABH_like"/>
    <property type="match status" value="1"/>
</dbReference>
<dbReference type="FunFam" id="2.40.100.10:FF:000002">
    <property type="entry name" value="Peptidyl-prolyl cis-trans isomerase"/>
    <property type="match status" value="1"/>
</dbReference>
<dbReference type="Gene3D" id="2.40.100.10">
    <property type="entry name" value="Cyclophilin-like"/>
    <property type="match status" value="1"/>
</dbReference>
<dbReference type="InterPro" id="IPR029000">
    <property type="entry name" value="Cyclophilin-like_dom_sf"/>
</dbReference>
<dbReference type="InterPro" id="IPR024936">
    <property type="entry name" value="Cyclophilin-type_PPIase"/>
</dbReference>
<dbReference type="InterPro" id="IPR020892">
    <property type="entry name" value="Cyclophilin-type_PPIase_CS"/>
</dbReference>
<dbReference type="InterPro" id="IPR002130">
    <property type="entry name" value="Cyclophilin-type_PPIase_dom"/>
</dbReference>
<dbReference type="PANTHER" id="PTHR11071">
    <property type="entry name" value="PEPTIDYL-PROLYL CIS-TRANS ISOMERASE"/>
    <property type="match status" value="1"/>
</dbReference>
<dbReference type="PANTHER" id="PTHR11071:SF561">
    <property type="entry name" value="PEPTIDYL-PROLYL CIS-TRANS ISOMERASE D-RELATED"/>
    <property type="match status" value="1"/>
</dbReference>
<dbReference type="Pfam" id="PF00160">
    <property type="entry name" value="Pro_isomerase"/>
    <property type="match status" value="1"/>
</dbReference>
<dbReference type="PIRSF" id="PIRSF001467">
    <property type="entry name" value="Peptidylpro_ismrse"/>
    <property type="match status" value="1"/>
</dbReference>
<dbReference type="PRINTS" id="PR00153">
    <property type="entry name" value="CSAPPISMRASE"/>
</dbReference>
<dbReference type="SUPFAM" id="SSF50891">
    <property type="entry name" value="Cyclophilin-like"/>
    <property type="match status" value="1"/>
</dbReference>
<dbReference type="PROSITE" id="PS00170">
    <property type="entry name" value="CSA_PPIASE_1"/>
    <property type="match status" value="1"/>
</dbReference>
<dbReference type="PROSITE" id="PS50072">
    <property type="entry name" value="CSA_PPIASE_2"/>
    <property type="match status" value="1"/>
</dbReference>
<accession>O49886</accession>
<reference key="1">
    <citation type="journal article" date="2001" name="Mol. Plant Microbe Interact.">
        <title>Yellow lupine cyclophilin transcripts are highly accumulated in the nodule meristem zone.</title>
        <authorList>
            <person name="Nuc K."/>
            <person name="Nuc P."/>
            <person name="Slomski R."/>
        </authorList>
    </citation>
    <scope>NUCLEOTIDE SEQUENCE [GENOMIC DNA / MRNA]</scope>
    <scope>TISSUE SPECIFICITY</scope>
    <source>
        <strain>cv. Ventus</strain>
        <tissue>Seedling</tissue>
    </source>
</reference>
<evidence type="ECO:0000255" key="1">
    <source>
        <dbReference type="PROSITE-ProRule" id="PRU00156"/>
    </source>
</evidence>
<evidence type="ECO:0000269" key="2">
    <source>
    </source>
</evidence>
<evidence type="ECO:0000305" key="3"/>
<organism>
    <name type="scientific">Lupinus luteus</name>
    <name type="common">European yellow lupine</name>
    <dbReference type="NCBI Taxonomy" id="3873"/>
    <lineage>
        <taxon>Eukaryota</taxon>
        <taxon>Viridiplantae</taxon>
        <taxon>Streptophyta</taxon>
        <taxon>Embryophyta</taxon>
        <taxon>Tracheophyta</taxon>
        <taxon>Spermatophyta</taxon>
        <taxon>Magnoliopsida</taxon>
        <taxon>eudicotyledons</taxon>
        <taxon>Gunneridae</taxon>
        <taxon>Pentapetalae</taxon>
        <taxon>rosids</taxon>
        <taxon>fabids</taxon>
        <taxon>Fabales</taxon>
        <taxon>Fabaceae</taxon>
        <taxon>Papilionoideae</taxon>
        <taxon>50 kb inversion clade</taxon>
        <taxon>genistoids sensu lato</taxon>
        <taxon>core genistoids</taxon>
        <taxon>Genisteae</taxon>
        <taxon>Lupinus</taxon>
    </lineage>
</organism>
<feature type="chain" id="PRO_0000064144" description="Peptidyl-prolyl cis-trans isomerase">
    <location>
        <begin position="1"/>
        <end position="172"/>
    </location>
</feature>
<feature type="domain" description="PPIase cyclophilin-type" evidence="1">
    <location>
        <begin position="7"/>
        <end position="170"/>
    </location>
</feature>